<comment type="function">
    <text evidence="1">Responsible for synthesis of pseudouridine from uracil-55 in the psi GC loop of transfer RNAs.</text>
</comment>
<comment type="catalytic activity">
    <reaction evidence="1">
        <text>uridine(55) in tRNA = pseudouridine(55) in tRNA</text>
        <dbReference type="Rhea" id="RHEA:42532"/>
        <dbReference type="Rhea" id="RHEA-COMP:10101"/>
        <dbReference type="Rhea" id="RHEA-COMP:10102"/>
        <dbReference type="ChEBI" id="CHEBI:65314"/>
        <dbReference type="ChEBI" id="CHEBI:65315"/>
        <dbReference type="EC" id="5.4.99.25"/>
    </reaction>
</comment>
<comment type="similarity">
    <text evidence="1">Belongs to the pseudouridine synthase TruB family. Type 1 subfamily.</text>
</comment>
<evidence type="ECO:0000255" key="1">
    <source>
        <dbReference type="HAMAP-Rule" id="MF_01080"/>
    </source>
</evidence>
<gene>
    <name evidence="1" type="primary">truB</name>
    <name type="ordered locus">Sfri_0992</name>
</gene>
<reference key="1">
    <citation type="submission" date="2006-08" db="EMBL/GenBank/DDBJ databases">
        <title>Complete sequence of Shewanella frigidimarina NCIMB 400.</title>
        <authorList>
            <consortium name="US DOE Joint Genome Institute"/>
            <person name="Copeland A."/>
            <person name="Lucas S."/>
            <person name="Lapidus A."/>
            <person name="Barry K."/>
            <person name="Detter J.C."/>
            <person name="Glavina del Rio T."/>
            <person name="Hammon N."/>
            <person name="Israni S."/>
            <person name="Dalin E."/>
            <person name="Tice H."/>
            <person name="Pitluck S."/>
            <person name="Fredrickson J.K."/>
            <person name="Kolker E."/>
            <person name="McCuel L.A."/>
            <person name="DiChristina T."/>
            <person name="Nealson K.H."/>
            <person name="Newman D."/>
            <person name="Tiedje J.M."/>
            <person name="Zhou J."/>
            <person name="Romine M.F."/>
            <person name="Culley D.E."/>
            <person name="Serres M."/>
            <person name="Chertkov O."/>
            <person name="Brettin T."/>
            <person name="Bruce D."/>
            <person name="Han C."/>
            <person name="Tapia R."/>
            <person name="Gilna P."/>
            <person name="Schmutz J."/>
            <person name="Larimer F."/>
            <person name="Land M."/>
            <person name="Hauser L."/>
            <person name="Kyrpides N."/>
            <person name="Mikhailova N."/>
            <person name="Richardson P."/>
        </authorList>
    </citation>
    <scope>NUCLEOTIDE SEQUENCE [LARGE SCALE GENOMIC DNA]</scope>
    <source>
        <strain>NCIMB 400</strain>
    </source>
</reference>
<keyword id="KW-0413">Isomerase</keyword>
<keyword id="KW-1185">Reference proteome</keyword>
<keyword id="KW-0819">tRNA processing</keyword>
<feature type="chain" id="PRO_1000084674" description="tRNA pseudouridine synthase B">
    <location>
        <begin position="1"/>
        <end position="317"/>
    </location>
</feature>
<feature type="active site" description="Nucleophile" evidence="1">
    <location>
        <position position="47"/>
    </location>
</feature>
<accession>Q086H0</accession>
<proteinExistence type="inferred from homology"/>
<name>TRUB_SHEFN</name>
<sequence>MARRPKGRFIDGIVLLDKDTGMSSNFALQRVKRFFNANKAGHTGALDPLATGMLPICLGEATKFSQHLLDSDKRYLVTAKLGQRTDTSDSDGEVVQTRPVNVTQALLDEKLAFFRGTTQQIPSMYSALKYQGQPLYKYAREGIEVPRESRPITVFELNFIKLEGDELTLDIHCSKGTYIRTIIDDLGEMLGCGAHVVMLRRTQVAEYPYEKMVTLAQLEALLEQAHRQDVAPQTLMDPLLLPMDTAVAKFAEINLPEAMLYYVMQGQAIQAAGLKPDELVRITIGDERRFVGMGIMNDDGLLAPKRLIVIHDNDAAE</sequence>
<dbReference type="EC" id="5.4.99.25" evidence="1"/>
<dbReference type="EMBL" id="CP000447">
    <property type="protein sequence ID" value="ABI70845.1"/>
    <property type="molecule type" value="Genomic_DNA"/>
</dbReference>
<dbReference type="RefSeq" id="WP_011636466.1">
    <property type="nucleotide sequence ID" value="NC_008345.1"/>
</dbReference>
<dbReference type="SMR" id="Q086H0"/>
<dbReference type="STRING" id="318167.Sfri_0992"/>
<dbReference type="KEGG" id="sfr:Sfri_0992"/>
<dbReference type="eggNOG" id="COG0130">
    <property type="taxonomic scope" value="Bacteria"/>
</dbReference>
<dbReference type="HOGENOM" id="CLU_032087_0_3_6"/>
<dbReference type="OrthoDB" id="9802309at2"/>
<dbReference type="Proteomes" id="UP000000684">
    <property type="component" value="Chromosome"/>
</dbReference>
<dbReference type="GO" id="GO:0003723">
    <property type="term" value="F:RNA binding"/>
    <property type="evidence" value="ECO:0007669"/>
    <property type="project" value="InterPro"/>
</dbReference>
<dbReference type="GO" id="GO:0160148">
    <property type="term" value="F:tRNA pseudouridine(55) synthase activity"/>
    <property type="evidence" value="ECO:0007669"/>
    <property type="project" value="UniProtKB-EC"/>
</dbReference>
<dbReference type="GO" id="GO:1990481">
    <property type="term" value="P:mRNA pseudouridine synthesis"/>
    <property type="evidence" value="ECO:0007669"/>
    <property type="project" value="TreeGrafter"/>
</dbReference>
<dbReference type="GO" id="GO:0031119">
    <property type="term" value="P:tRNA pseudouridine synthesis"/>
    <property type="evidence" value="ECO:0007669"/>
    <property type="project" value="UniProtKB-UniRule"/>
</dbReference>
<dbReference type="CDD" id="cd02573">
    <property type="entry name" value="PseudoU_synth_EcTruB"/>
    <property type="match status" value="1"/>
</dbReference>
<dbReference type="CDD" id="cd21152">
    <property type="entry name" value="PUA_TruB_bacterial"/>
    <property type="match status" value="1"/>
</dbReference>
<dbReference type="FunFam" id="3.30.2350.10:FF:000003">
    <property type="entry name" value="tRNA pseudouridine synthase B"/>
    <property type="match status" value="1"/>
</dbReference>
<dbReference type="Gene3D" id="3.30.2350.10">
    <property type="entry name" value="Pseudouridine synthase"/>
    <property type="match status" value="1"/>
</dbReference>
<dbReference type="Gene3D" id="2.30.130.10">
    <property type="entry name" value="PUA domain"/>
    <property type="match status" value="1"/>
</dbReference>
<dbReference type="HAMAP" id="MF_01080">
    <property type="entry name" value="TruB_bact"/>
    <property type="match status" value="1"/>
</dbReference>
<dbReference type="InterPro" id="IPR020103">
    <property type="entry name" value="PsdUridine_synth_cat_dom_sf"/>
</dbReference>
<dbReference type="InterPro" id="IPR002501">
    <property type="entry name" value="PsdUridine_synth_N"/>
</dbReference>
<dbReference type="InterPro" id="IPR015947">
    <property type="entry name" value="PUA-like_sf"/>
</dbReference>
<dbReference type="InterPro" id="IPR036974">
    <property type="entry name" value="PUA_sf"/>
</dbReference>
<dbReference type="InterPro" id="IPR014780">
    <property type="entry name" value="tRNA_psdUridine_synth_TruB"/>
</dbReference>
<dbReference type="InterPro" id="IPR015240">
    <property type="entry name" value="tRNA_sdUridine_synth_fam1_C"/>
</dbReference>
<dbReference type="InterPro" id="IPR032819">
    <property type="entry name" value="TruB_C"/>
</dbReference>
<dbReference type="NCBIfam" id="TIGR00431">
    <property type="entry name" value="TruB"/>
    <property type="match status" value="1"/>
</dbReference>
<dbReference type="PANTHER" id="PTHR13767:SF2">
    <property type="entry name" value="PSEUDOURIDYLATE SYNTHASE TRUB1"/>
    <property type="match status" value="1"/>
</dbReference>
<dbReference type="PANTHER" id="PTHR13767">
    <property type="entry name" value="TRNA-PSEUDOURIDINE SYNTHASE"/>
    <property type="match status" value="1"/>
</dbReference>
<dbReference type="Pfam" id="PF09157">
    <property type="entry name" value="TruB-C_2"/>
    <property type="match status" value="1"/>
</dbReference>
<dbReference type="Pfam" id="PF16198">
    <property type="entry name" value="TruB_C_2"/>
    <property type="match status" value="1"/>
</dbReference>
<dbReference type="Pfam" id="PF01509">
    <property type="entry name" value="TruB_N"/>
    <property type="match status" value="1"/>
</dbReference>
<dbReference type="SUPFAM" id="SSF55120">
    <property type="entry name" value="Pseudouridine synthase"/>
    <property type="match status" value="1"/>
</dbReference>
<dbReference type="SUPFAM" id="SSF88697">
    <property type="entry name" value="PUA domain-like"/>
    <property type="match status" value="1"/>
</dbReference>
<protein>
    <recommendedName>
        <fullName evidence="1">tRNA pseudouridine synthase B</fullName>
        <ecNumber evidence="1">5.4.99.25</ecNumber>
    </recommendedName>
    <alternativeName>
        <fullName evidence="1">tRNA pseudouridine(55) synthase</fullName>
        <shortName evidence="1">Psi55 synthase</shortName>
    </alternativeName>
    <alternativeName>
        <fullName evidence="1">tRNA pseudouridylate synthase</fullName>
    </alternativeName>
    <alternativeName>
        <fullName evidence="1">tRNA-uridine isomerase</fullName>
    </alternativeName>
</protein>
<organism>
    <name type="scientific">Shewanella frigidimarina (strain NCIMB 400)</name>
    <dbReference type="NCBI Taxonomy" id="318167"/>
    <lineage>
        <taxon>Bacteria</taxon>
        <taxon>Pseudomonadati</taxon>
        <taxon>Pseudomonadota</taxon>
        <taxon>Gammaproteobacteria</taxon>
        <taxon>Alteromonadales</taxon>
        <taxon>Shewanellaceae</taxon>
        <taxon>Shewanella</taxon>
    </lineage>
</organism>